<name>SECA_STRP8</name>
<dbReference type="EC" id="7.4.2.8" evidence="1"/>
<dbReference type="EMBL" id="AE009949">
    <property type="protein sequence ID" value="AAL98381.1"/>
    <property type="molecule type" value="Genomic_DNA"/>
</dbReference>
<dbReference type="RefSeq" id="WP_002988523.1">
    <property type="nucleotide sequence ID" value="NC_003485.1"/>
</dbReference>
<dbReference type="SMR" id="Q8NZK2"/>
<dbReference type="GeneID" id="69900360"/>
<dbReference type="KEGG" id="spm:spyM18_1873"/>
<dbReference type="HOGENOM" id="CLU_005314_3_0_9"/>
<dbReference type="GO" id="GO:0031522">
    <property type="term" value="C:cell envelope Sec protein transport complex"/>
    <property type="evidence" value="ECO:0007669"/>
    <property type="project" value="TreeGrafter"/>
</dbReference>
<dbReference type="GO" id="GO:0005829">
    <property type="term" value="C:cytosol"/>
    <property type="evidence" value="ECO:0007669"/>
    <property type="project" value="TreeGrafter"/>
</dbReference>
<dbReference type="GO" id="GO:0005886">
    <property type="term" value="C:plasma membrane"/>
    <property type="evidence" value="ECO:0007669"/>
    <property type="project" value="UniProtKB-SubCell"/>
</dbReference>
<dbReference type="GO" id="GO:0005524">
    <property type="term" value="F:ATP binding"/>
    <property type="evidence" value="ECO:0007669"/>
    <property type="project" value="UniProtKB-UniRule"/>
</dbReference>
<dbReference type="GO" id="GO:0046872">
    <property type="term" value="F:metal ion binding"/>
    <property type="evidence" value="ECO:0007669"/>
    <property type="project" value="UniProtKB-KW"/>
</dbReference>
<dbReference type="GO" id="GO:0008564">
    <property type="term" value="F:protein-exporting ATPase activity"/>
    <property type="evidence" value="ECO:0007669"/>
    <property type="project" value="UniProtKB-EC"/>
</dbReference>
<dbReference type="GO" id="GO:0065002">
    <property type="term" value="P:intracellular protein transmembrane transport"/>
    <property type="evidence" value="ECO:0007669"/>
    <property type="project" value="UniProtKB-UniRule"/>
</dbReference>
<dbReference type="GO" id="GO:0017038">
    <property type="term" value="P:protein import"/>
    <property type="evidence" value="ECO:0007669"/>
    <property type="project" value="InterPro"/>
</dbReference>
<dbReference type="GO" id="GO:0006605">
    <property type="term" value="P:protein targeting"/>
    <property type="evidence" value="ECO:0007669"/>
    <property type="project" value="UniProtKB-UniRule"/>
</dbReference>
<dbReference type="GO" id="GO:0043952">
    <property type="term" value="P:protein transport by the Sec complex"/>
    <property type="evidence" value="ECO:0007669"/>
    <property type="project" value="TreeGrafter"/>
</dbReference>
<dbReference type="CDD" id="cd17928">
    <property type="entry name" value="DEXDc_SecA"/>
    <property type="match status" value="1"/>
</dbReference>
<dbReference type="CDD" id="cd18803">
    <property type="entry name" value="SF2_C_secA"/>
    <property type="match status" value="1"/>
</dbReference>
<dbReference type="FunFam" id="1.10.3060.10:FF:000002">
    <property type="entry name" value="Preprotein translocase subunit SecA"/>
    <property type="match status" value="1"/>
</dbReference>
<dbReference type="FunFam" id="3.40.50.300:FF:000429">
    <property type="entry name" value="Preprotein translocase subunit SecA"/>
    <property type="match status" value="1"/>
</dbReference>
<dbReference type="FunFam" id="3.90.1440.10:FF:000001">
    <property type="entry name" value="Preprotein translocase subunit SecA"/>
    <property type="match status" value="1"/>
</dbReference>
<dbReference type="Gene3D" id="1.10.3060.10">
    <property type="entry name" value="Helical scaffold and wing domains of SecA"/>
    <property type="match status" value="1"/>
</dbReference>
<dbReference type="Gene3D" id="3.40.50.300">
    <property type="entry name" value="P-loop containing nucleotide triphosphate hydrolases"/>
    <property type="match status" value="3"/>
</dbReference>
<dbReference type="Gene3D" id="3.90.1440.10">
    <property type="entry name" value="SecA, preprotein cross-linking domain"/>
    <property type="match status" value="1"/>
</dbReference>
<dbReference type="HAMAP" id="MF_01382">
    <property type="entry name" value="SecA"/>
    <property type="match status" value="1"/>
</dbReference>
<dbReference type="InterPro" id="IPR014001">
    <property type="entry name" value="Helicase_ATP-bd"/>
</dbReference>
<dbReference type="InterPro" id="IPR001650">
    <property type="entry name" value="Helicase_C-like"/>
</dbReference>
<dbReference type="InterPro" id="IPR027417">
    <property type="entry name" value="P-loop_NTPase"/>
</dbReference>
<dbReference type="InterPro" id="IPR004027">
    <property type="entry name" value="SEC_C_motif"/>
</dbReference>
<dbReference type="InterPro" id="IPR000185">
    <property type="entry name" value="SecA"/>
</dbReference>
<dbReference type="InterPro" id="IPR020937">
    <property type="entry name" value="SecA_CS"/>
</dbReference>
<dbReference type="InterPro" id="IPR011115">
    <property type="entry name" value="SecA_DEAD"/>
</dbReference>
<dbReference type="InterPro" id="IPR014018">
    <property type="entry name" value="SecA_motor_DEAD"/>
</dbReference>
<dbReference type="InterPro" id="IPR011130">
    <property type="entry name" value="SecA_preprotein_X-link_dom"/>
</dbReference>
<dbReference type="InterPro" id="IPR044722">
    <property type="entry name" value="SecA_SF2_C"/>
</dbReference>
<dbReference type="InterPro" id="IPR011116">
    <property type="entry name" value="SecA_Wing/Scaffold"/>
</dbReference>
<dbReference type="InterPro" id="IPR036266">
    <property type="entry name" value="SecA_Wing/Scaffold_sf"/>
</dbReference>
<dbReference type="InterPro" id="IPR036670">
    <property type="entry name" value="SecA_X-link_sf"/>
</dbReference>
<dbReference type="NCBIfam" id="NF006630">
    <property type="entry name" value="PRK09200.1"/>
    <property type="match status" value="1"/>
</dbReference>
<dbReference type="NCBIfam" id="TIGR00963">
    <property type="entry name" value="secA"/>
    <property type="match status" value="1"/>
</dbReference>
<dbReference type="PANTHER" id="PTHR30612:SF0">
    <property type="entry name" value="CHLOROPLAST PROTEIN-TRANSPORTING ATPASE"/>
    <property type="match status" value="1"/>
</dbReference>
<dbReference type="PANTHER" id="PTHR30612">
    <property type="entry name" value="SECA INNER MEMBRANE COMPONENT OF SEC PROTEIN SECRETION SYSTEM"/>
    <property type="match status" value="1"/>
</dbReference>
<dbReference type="Pfam" id="PF21090">
    <property type="entry name" value="P-loop_SecA"/>
    <property type="match status" value="2"/>
</dbReference>
<dbReference type="Pfam" id="PF02810">
    <property type="entry name" value="SEC-C"/>
    <property type="match status" value="1"/>
</dbReference>
<dbReference type="Pfam" id="PF07517">
    <property type="entry name" value="SecA_DEAD"/>
    <property type="match status" value="1"/>
</dbReference>
<dbReference type="Pfam" id="PF01043">
    <property type="entry name" value="SecA_PP_bind"/>
    <property type="match status" value="1"/>
</dbReference>
<dbReference type="Pfam" id="PF07516">
    <property type="entry name" value="SecA_SW"/>
    <property type="match status" value="1"/>
</dbReference>
<dbReference type="PRINTS" id="PR00906">
    <property type="entry name" value="SECA"/>
</dbReference>
<dbReference type="SMART" id="SM00957">
    <property type="entry name" value="SecA_DEAD"/>
    <property type="match status" value="1"/>
</dbReference>
<dbReference type="SMART" id="SM00958">
    <property type="entry name" value="SecA_PP_bind"/>
    <property type="match status" value="1"/>
</dbReference>
<dbReference type="SUPFAM" id="SSF81886">
    <property type="entry name" value="Helical scaffold and wing domains of SecA"/>
    <property type="match status" value="1"/>
</dbReference>
<dbReference type="SUPFAM" id="SSF52540">
    <property type="entry name" value="P-loop containing nucleoside triphosphate hydrolases"/>
    <property type="match status" value="2"/>
</dbReference>
<dbReference type="SUPFAM" id="SSF81767">
    <property type="entry name" value="Pre-protein crosslinking domain of SecA"/>
    <property type="match status" value="1"/>
</dbReference>
<dbReference type="PROSITE" id="PS01312">
    <property type="entry name" value="SECA"/>
    <property type="match status" value="1"/>
</dbReference>
<dbReference type="PROSITE" id="PS51196">
    <property type="entry name" value="SECA_MOTOR_DEAD"/>
    <property type="match status" value="1"/>
</dbReference>
<organism>
    <name type="scientific">Streptococcus pyogenes serotype M18 (strain MGAS8232)</name>
    <dbReference type="NCBI Taxonomy" id="186103"/>
    <lineage>
        <taxon>Bacteria</taxon>
        <taxon>Bacillati</taxon>
        <taxon>Bacillota</taxon>
        <taxon>Bacilli</taxon>
        <taxon>Lactobacillales</taxon>
        <taxon>Streptococcaceae</taxon>
        <taxon>Streptococcus</taxon>
    </lineage>
</organism>
<gene>
    <name evidence="1" type="primary">secA</name>
    <name type="ordered locus">spyM18_1873</name>
</gene>
<evidence type="ECO:0000255" key="1">
    <source>
        <dbReference type="HAMAP-Rule" id="MF_01382"/>
    </source>
</evidence>
<evidence type="ECO:0000256" key="2">
    <source>
        <dbReference type="SAM" id="MobiDB-lite"/>
    </source>
</evidence>
<keyword id="KW-0067">ATP-binding</keyword>
<keyword id="KW-1003">Cell membrane</keyword>
<keyword id="KW-0963">Cytoplasm</keyword>
<keyword id="KW-0472">Membrane</keyword>
<keyword id="KW-0479">Metal-binding</keyword>
<keyword id="KW-0547">Nucleotide-binding</keyword>
<keyword id="KW-0653">Protein transport</keyword>
<keyword id="KW-1278">Translocase</keyword>
<keyword id="KW-0811">Translocation</keyword>
<keyword id="KW-0813">Transport</keyword>
<keyword id="KW-0862">Zinc</keyword>
<proteinExistence type="inferred from homology"/>
<feature type="chain" id="PRO_0000318449" description="Protein translocase subunit SecA">
    <location>
        <begin position="1"/>
        <end position="839"/>
    </location>
</feature>
<feature type="region of interest" description="Disordered" evidence="2">
    <location>
        <begin position="780"/>
        <end position="839"/>
    </location>
</feature>
<feature type="compositionally biased region" description="Basic and acidic residues" evidence="2">
    <location>
        <begin position="780"/>
        <end position="790"/>
    </location>
</feature>
<feature type="compositionally biased region" description="Polar residues" evidence="2">
    <location>
        <begin position="791"/>
        <end position="809"/>
    </location>
</feature>
<feature type="compositionally biased region" description="Basic residues" evidence="2">
    <location>
        <begin position="827"/>
        <end position="839"/>
    </location>
</feature>
<feature type="binding site" evidence="1">
    <location>
        <position position="85"/>
    </location>
    <ligand>
        <name>ATP</name>
        <dbReference type="ChEBI" id="CHEBI:30616"/>
    </ligand>
</feature>
<feature type="binding site" evidence="1">
    <location>
        <begin position="103"/>
        <end position="107"/>
    </location>
    <ligand>
        <name>ATP</name>
        <dbReference type="ChEBI" id="CHEBI:30616"/>
    </ligand>
</feature>
<feature type="binding site" evidence="1">
    <location>
        <position position="493"/>
    </location>
    <ligand>
        <name>ATP</name>
        <dbReference type="ChEBI" id="CHEBI:30616"/>
    </ligand>
</feature>
<feature type="binding site" evidence="1">
    <location>
        <position position="821"/>
    </location>
    <ligand>
        <name>Zn(2+)</name>
        <dbReference type="ChEBI" id="CHEBI:29105"/>
    </ligand>
</feature>
<feature type="binding site" evidence="1">
    <location>
        <position position="823"/>
    </location>
    <ligand>
        <name>Zn(2+)</name>
        <dbReference type="ChEBI" id="CHEBI:29105"/>
    </ligand>
</feature>
<feature type="binding site" evidence="1">
    <location>
        <position position="832"/>
    </location>
    <ligand>
        <name>Zn(2+)</name>
        <dbReference type="ChEBI" id="CHEBI:29105"/>
    </ligand>
</feature>
<feature type="binding site" evidence="1">
    <location>
        <position position="833"/>
    </location>
    <ligand>
        <name>Zn(2+)</name>
        <dbReference type="ChEBI" id="CHEBI:29105"/>
    </ligand>
</feature>
<comment type="function">
    <text evidence="1">Part of the Sec protein translocase complex. Interacts with the SecYEG preprotein conducting channel. Has a central role in coupling the hydrolysis of ATP to the transfer of proteins into and across the cell membrane, serving as an ATP-driven molecular motor driving the stepwise translocation of polypeptide chains across the membrane.</text>
</comment>
<comment type="catalytic activity">
    <reaction evidence="1">
        <text>ATP + H2O + cellular proteinSide 1 = ADP + phosphate + cellular proteinSide 2.</text>
        <dbReference type="EC" id="7.4.2.8"/>
    </reaction>
</comment>
<comment type="cofactor">
    <cofactor evidence="1">
        <name>Zn(2+)</name>
        <dbReference type="ChEBI" id="CHEBI:29105"/>
    </cofactor>
    <text evidence="1">May bind 1 zinc ion per subunit.</text>
</comment>
<comment type="subunit">
    <text evidence="1">Monomer and homodimer. Part of the essential Sec protein translocation apparatus which comprises SecA, SecYEG and auxiliary proteins SecDF. Other proteins may also be involved.</text>
</comment>
<comment type="subcellular location">
    <subcellularLocation>
        <location evidence="1">Cell membrane</location>
        <topology evidence="1">Peripheral membrane protein</topology>
        <orientation evidence="1">Cytoplasmic side</orientation>
    </subcellularLocation>
    <subcellularLocation>
        <location evidence="1">Cytoplasm</location>
    </subcellularLocation>
    <text evidence="1">Distribution is 50-50.</text>
</comment>
<comment type="similarity">
    <text evidence="1">Belongs to the SecA family.</text>
</comment>
<accession>Q8NZK2</accession>
<sequence>MANILRKVIENDKGELRKLEKIAKKVESYADQMASLSDRDLQGKTLEFKERYQKGETLEQLLPEAFAVVREAAKRVLGLFPYRVQIMGGIVLHNGDVPEMRTGEGKTLTATMPVYLNAIAGEGVHVITVNEYLSTRDATEMGEVYSWLGLSVGINLAAKSPAEKREAYNCDITYSTNSEVGFDYLRDNMVVRQEDMVQRPLNFALVDEVDSVLIDEARTPLIVSGAVSSETNQLYIRADMFVKTLTSVDYVIDVPTKTIGLSDSGIDKAESYFNLSNLYDIENVALTHFIDNALRANYIMLLDIDYVVSEDGEILIVDQFTGRTMEGRRFSDGLHQAIEAKEGVRIQEESKTSASITYQNMFRMYKKLAGMTGTAKTEEEEFREVYNMRIIPIPTNRPIARIDHTDLLYPTLESKFRAVVEDVKTRHAKGQPILVGTVAVETSDLISRKLVEAGIPHEVLNAKNHFKEAQIIMNAGQRGAVTIATNMAGRGTDIKLGEGVRELGGLCVIGTERHESRRIDNQLRGRSGRQGDPGESQFYLSLEDDLMRRFGSDRIKAFLDRMKLDEEDTVIKSGMLGRQVESAQKRVEGNNYDTRKQVLQYDDVMREQREIIYANRRDVITANRDLGPEIKAMIKRTIDRAVDAHARSNRKDAIDAIVTFARTSLVPEESISAKELRGLKDDQIKEKLYQRALAIYDQQLSKLRDQEAIIEFQKVLILMIVDNKWTEHIDALDQLRNAVGLRGYAQNNPVVEYQAEGFKMFQDMIGAIEFDVTRTMMKAQIHEQERERASQRATTAAPQNIQSQQSANTDDLPKVERNEACPCGSGKKFKNCHGRKSFS</sequence>
<reference key="1">
    <citation type="journal article" date="2002" name="Proc. Natl. Acad. Sci. U.S.A.">
        <title>Genome sequence and comparative microarray analysis of serotype M18 group A Streptococcus strains associated with acute rheumatic fever outbreaks.</title>
        <authorList>
            <person name="Smoot J.C."/>
            <person name="Barbian K.D."/>
            <person name="Van Gompel J.J."/>
            <person name="Smoot L.M."/>
            <person name="Chaussee M.S."/>
            <person name="Sylva G.L."/>
            <person name="Sturdevant D.E."/>
            <person name="Ricklefs S.M."/>
            <person name="Porcella S.F."/>
            <person name="Parkins L.D."/>
            <person name="Beres S.B."/>
            <person name="Campbell D.S."/>
            <person name="Smith T.M."/>
            <person name="Zhang Q."/>
            <person name="Kapur V."/>
            <person name="Daly J.A."/>
            <person name="Veasy L.G."/>
            <person name="Musser J.M."/>
        </authorList>
    </citation>
    <scope>NUCLEOTIDE SEQUENCE [LARGE SCALE GENOMIC DNA]</scope>
    <source>
        <strain>MGAS8232</strain>
    </source>
</reference>
<protein>
    <recommendedName>
        <fullName evidence="1">Protein translocase subunit SecA</fullName>
        <ecNumber evidence="1">7.4.2.8</ecNumber>
    </recommendedName>
</protein>